<evidence type="ECO:0000255" key="1">
    <source>
        <dbReference type="HAMAP-Rule" id="MF_00391"/>
    </source>
</evidence>
<evidence type="ECO:0000305" key="2"/>
<organism>
    <name type="scientific">Leptothrix cholodnii (strain ATCC 51168 / LMG 8142 / SP-6)</name>
    <name type="common">Leptothrix discophora (strain SP-6)</name>
    <dbReference type="NCBI Taxonomy" id="395495"/>
    <lineage>
        <taxon>Bacteria</taxon>
        <taxon>Pseudomonadati</taxon>
        <taxon>Pseudomonadota</taxon>
        <taxon>Betaproteobacteria</taxon>
        <taxon>Burkholderiales</taxon>
        <taxon>Sphaerotilaceae</taxon>
        <taxon>Leptothrix</taxon>
    </lineage>
</organism>
<accession>B1Y0G0</accession>
<comment type="similarity">
    <text evidence="1">Belongs to the bacterial ribosomal protein bL34 family.</text>
</comment>
<feature type="chain" id="PRO_1000196063" description="Large ribosomal subunit protein bL34">
    <location>
        <begin position="1"/>
        <end position="44"/>
    </location>
</feature>
<keyword id="KW-1185">Reference proteome</keyword>
<keyword id="KW-0687">Ribonucleoprotein</keyword>
<keyword id="KW-0689">Ribosomal protein</keyword>
<proteinExistence type="inferred from homology"/>
<name>RL34_LEPCP</name>
<dbReference type="EMBL" id="CP001013">
    <property type="protein sequence ID" value="ACB36639.1"/>
    <property type="molecule type" value="Genomic_DNA"/>
</dbReference>
<dbReference type="RefSeq" id="WP_012349380.1">
    <property type="nucleotide sequence ID" value="NC_010524.1"/>
</dbReference>
<dbReference type="SMR" id="B1Y0G0"/>
<dbReference type="STRING" id="395495.Lcho_4388"/>
<dbReference type="KEGG" id="lch:Lcho_4388"/>
<dbReference type="eggNOG" id="COG0230">
    <property type="taxonomic scope" value="Bacteria"/>
</dbReference>
<dbReference type="HOGENOM" id="CLU_129938_2_0_4"/>
<dbReference type="OrthoDB" id="9804164at2"/>
<dbReference type="Proteomes" id="UP000001693">
    <property type="component" value="Chromosome"/>
</dbReference>
<dbReference type="GO" id="GO:1990904">
    <property type="term" value="C:ribonucleoprotein complex"/>
    <property type="evidence" value="ECO:0007669"/>
    <property type="project" value="UniProtKB-KW"/>
</dbReference>
<dbReference type="GO" id="GO:0005840">
    <property type="term" value="C:ribosome"/>
    <property type="evidence" value="ECO:0007669"/>
    <property type="project" value="UniProtKB-KW"/>
</dbReference>
<dbReference type="GO" id="GO:0003735">
    <property type="term" value="F:structural constituent of ribosome"/>
    <property type="evidence" value="ECO:0007669"/>
    <property type="project" value="InterPro"/>
</dbReference>
<dbReference type="GO" id="GO:0006412">
    <property type="term" value="P:translation"/>
    <property type="evidence" value="ECO:0007669"/>
    <property type="project" value="UniProtKB-UniRule"/>
</dbReference>
<dbReference type="FunFam" id="1.10.287.3980:FF:000001">
    <property type="entry name" value="Mitochondrial ribosomal protein L34"/>
    <property type="match status" value="1"/>
</dbReference>
<dbReference type="Gene3D" id="1.10.287.3980">
    <property type="match status" value="1"/>
</dbReference>
<dbReference type="HAMAP" id="MF_00391">
    <property type="entry name" value="Ribosomal_bL34"/>
    <property type="match status" value="1"/>
</dbReference>
<dbReference type="InterPro" id="IPR000271">
    <property type="entry name" value="Ribosomal_bL34"/>
</dbReference>
<dbReference type="InterPro" id="IPR020939">
    <property type="entry name" value="Ribosomal_bL34_CS"/>
</dbReference>
<dbReference type="NCBIfam" id="TIGR01030">
    <property type="entry name" value="rpmH_bact"/>
    <property type="match status" value="1"/>
</dbReference>
<dbReference type="PANTHER" id="PTHR14503:SF4">
    <property type="entry name" value="LARGE RIBOSOMAL SUBUNIT PROTEIN BL34M"/>
    <property type="match status" value="1"/>
</dbReference>
<dbReference type="PANTHER" id="PTHR14503">
    <property type="entry name" value="MITOCHONDRIAL RIBOSOMAL PROTEIN 34 FAMILY MEMBER"/>
    <property type="match status" value="1"/>
</dbReference>
<dbReference type="Pfam" id="PF00468">
    <property type="entry name" value="Ribosomal_L34"/>
    <property type="match status" value="1"/>
</dbReference>
<dbReference type="PROSITE" id="PS00784">
    <property type="entry name" value="RIBOSOMAL_L34"/>
    <property type="match status" value="1"/>
</dbReference>
<reference key="1">
    <citation type="submission" date="2008-03" db="EMBL/GenBank/DDBJ databases">
        <title>Complete sequence of Leptothrix cholodnii SP-6.</title>
        <authorList>
            <consortium name="US DOE Joint Genome Institute"/>
            <person name="Copeland A."/>
            <person name="Lucas S."/>
            <person name="Lapidus A."/>
            <person name="Glavina del Rio T."/>
            <person name="Dalin E."/>
            <person name="Tice H."/>
            <person name="Bruce D."/>
            <person name="Goodwin L."/>
            <person name="Pitluck S."/>
            <person name="Chertkov O."/>
            <person name="Brettin T."/>
            <person name="Detter J.C."/>
            <person name="Han C."/>
            <person name="Kuske C.R."/>
            <person name="Schmutz J."/>
            <person name="Larimer F."/>
            <person name="Land M."/>
            <person name="Hauser L."/>
            <person name="Kyrpides N."/>
            <person name="Lykidis A."/>
            <person name="Emerson D."/>
            <person name="Richardson P."/>
        </authorList>
    </citation>
    <scope>NUCLEOTIDE SEQUENCE [LARGE SCALE GENOMIC DNA]</scope>
    <source>
        <strain>ATCC 51168 / LMG 8142 / SP-6</strain>
    </source>
</reference>
<sequence>MKRTYQPSKVRRARTHGFLVRMKSRGGRSVIAARRAKGRKRLAV</sequence>
<protein>
    <recommendedName>
        <fullName evidence="1">Large ribosomal subunit protein bL34</fullName>
    </recommendedName>
    <alternativeName>
        <fullName evidence="2">50S ribosomal protein L34</fullName>
    </alternativeName>
</protein>
<gene>
    <name evidence="1" type="primary">rpmH</name>
    <name type="ordered locus">Lcho_4388</name>
</gene>